<feature type="chain" id="PRO_0000100366" description="Oxysterol-binding protein 2">
    <location>
        <begin position="1"/>
        <end position="916"/>
    </location>
</feature>
<feature type="domain" description="PH" evidence="3">
    <location>
        <begin position="182"/>
        <end position="274"/>
    </location>
</feature>
<feature type="region of interest" description="Disordered" evidence="4">
    <location>
        <begin position="1"/>
        <end position="20"/>
    </location>
</feature>
<feature type="region of interest" description="Disordered" evidence="4">
    <location>
        <begin position="34"/>
        <end position="121"/>
    </location>
</feature>
<feature type="region of interest" description="Disordered" evidence="4">
    <location>
        <begin position="139"/>
        <end position="163"/>
    </location>
</feature>
<feature type="region of interest" description="Disordered" evidence="4">
    <location>
        <begin position="282"/>
        <end position="301"/>
    </location>
</feature>
<feature type="region of interest" description="Disordered" evidence="4">
    <location>
        <begin position="417"/>
        <end position="448"/>
    </location>
</feature>
<feature type="region of interest" description="Disordered" evidence="4">
    <location>
        <begin position="813"/>
        <end position="842"/>
    </location>
</feature>
<feature type="compositionally biased region" description="Pro residues" evidence="4">
    <location>
        <begin position="49"/>
        <end position="58"/>
    </location>
</feature>
<feature type="compositionally biased region" description="Low complexity" evidence="4">
    <location>
        <begin position="79"/>
        <end position="92"/>
    </location>
</feature>
<feature type="compositionally biased region" description="Polar residues" evidence="4">
    <location>
        <begin position="99"/>
        <end position="113"/>
    </location>
</feature>
<feature type="compositionally biased region" description="Low complexity" evidence="4">
    <location>
        <begin position="144"/>
        <end position="155"/>
    </location>
</feature>
<feature type="modified residue" description="Phosphoserine" evidence="1">
    <location>
        <position position="287"/>
    </location>
</feature>
<feature type="modified residue" description="Phosphoserine" evidence="9">
    <location>
        <position position="763"/>
    </location>
</feature>
<feature type="splice variant" id="VSP_055262" description="In isoform 5." evidence="6">
    <location>
        <begin position="1"/>
        <end position="455"/>
    </location>
</feature>
<feature type="splice variant" id="VSP_055263" description="In isoform 4." evidence="6">
    <location>
        <begin position="1"/>
        <end position="366"/>
    </location>
</feature>
<feature type="splice variant" id="VSP_055751" description="In isoform 6." evidence="6">
    <original>MGKAAAPSRGGGCGGRSRGLSSLFTVVPCLSCHTAAPGMSASTSGSGPEPKPQPQPVPEPERGPLSEQVSEAVSEAVPRSEPVSETTSEPEPGAGQPSELLQGSRPGSESSSGVGAGPFTKAASEPLSRAVGSATFLRPESGSLPALKPLPLLRPGQAKTPLGVPMSGTGTTSSAPLALLPLDSFEGWLLKWTNYLKGYQRRWFVLGNGLLSYYRNQGEMAHTCRGTINLSTAHIDTEDSCGILLTSGARSYHLKASSEVDRQQWITALELAKAKAVRVMNTHS</original>
    <variation>MKGRGCWDTASVRSFCSSGCLNKFKK</variation>
    <location>
        <begin position="1"/>
        <end position="284"/>
    </location>
</feature>
<feature type="splice variant" id="VSP_054886" description="In isoform 3." evidence="6">
    <original>MGKAAAPSRGGGCGGRSRGLSSLFTVVPCLSCHTAAPGMSASTSGSGPE</original>
    <variation>MHRQRTRTMSSLAAKRLGMNRRPAGSGGGGGEAATWGHRFWRPQERPTD</variation>
    <location>
        <begin position="1"/>
        <end position="49"/>
    </location>
</feature>
<feature type="splice variant" id="VSP_054887" description="In isoform 3." evidence="6">
    <location>
        <begin position="50"/>
        <end position="214"/>
    </location>
</feature>
<feature type="splice variant" id="VSP_054520" description="In isoform 2, isoform 3, isoform 4 and isoform 5." evidence="6 7">
    <location>
        <position position="473"/>
    </location>
</feature>
<feature type="splice variant" id="VSP_055752" description="In isoform 6." evidence="6">
    <original>E</original>
    <variation>EA</variation>
    <location>
        <position position="869"/>
    </location>
</feature>
<feature type="sequence variant" id="VAR_053546" description="In dbSNP:rs34240867.">
    <original>M</original>
    <variation>V</variation>
    <location>
        <position position="760"/>
    </location>
</feature>
<feature type="sequence conflict" description="In Ref. 3; BAB33334." evidence="8" ref="3">
    <original>T</original>
    <variation>A</variation>
    <location>
        <position position="34"/>
    </location>
</feature>
<feature type="sequence conflict" description="In Ref. 5; BAG59036." evidence="8" ref="5">
    <original>Q</original>
    <variation>H</variation>
    <location>
        <position position="552"/>
    </location>
</feature>
<evidence type="ECO:0000250" key="1">
    <source>
        <dbReference type="UniProtKB" id="Q5QNQ6"/>
    </source>
</evidence>
<evidence type="ECO:0000250" key="2">
    <source>
        <dbReference type="UniProtKB" id="Q8CF21"/>
    </source>
</evidence>
<evidence type="ECO:0000255" key="3">
    <source>
        <dbReference type="PROSITE-ProRule" id="PRU00145"/>
    </source>
</evidence>
<evidence type="ECO:0000256" key="4">
    <source>
        <dbReference type="SAM" id="MobiDB-lite"/>
    </source>
</evidence>
<evidence type="ECO:0000269" key="5">
    <source>
    </source>
</evidence>
<evidence type="ECO:0000303" key="6">
    <source>
    </source>
</evidence>
<evidence type="ECO:0000303" key="7">
    <source>
    </source>
</evidence>
<evidence type="ECO:0000305" key="8"/>
<evidence type="ECO:0007744" key="9">
    <source>
    </source>
</evidence>
<reference key="1">
    <citation type="journal article" date="2001" name="J. Biol. Chem.">
        <title>Molecular and biochemical characterization of a novel oxysterol-binding protein (OSBP2) highly expressed in retina.</title>
        <authorList>
            <person name="Moreira E.F."/>
            <person name="Jaworski C."/>
            <person name="Li A."/>
            <person name="Rodriguez I.R."/>
        </authorList>
    </citation>
    <scope>NUCLEOTIDE SEQUENCE [GENOMIC DNA] (ISOFORM 1)</scope>
    <scope>NUCLEOTIDE SEQUENCE [MRNA] OF 2-916 (ISOFORM 1)</scope>
    <scope>FUNCTION</scope>
    <scope>SUBCELLULAR LOCATION</scope>
    <scope>TISSUE SPECIFICITY</scope>
</reference>
<reference key="2">
    <citation type="journal article" date="2001" name="J. Lipid Res.">
        <title>The OSBP-related protein family in humans.</title>
        <authorList>
            <person name="Lehto M."/>
            <person name="Laitinen S."/>
            <person name="Chinetti G."/>
            <person name="Johansson M."/>
            <person name="Ehnholm C."/>
            <person name="Staels B."/>
            <person name="Ikonen E."/>
            <person name="Olkkonen V.M."/>
        </authorList>
    </citation>
    <scope>NUCLEOTIDE SEQUENCE [MRNA] (ISOFORM 1)</scope>
</reference>
<reference key="3">
    <citation type="journal article" date="2001" name="DNA Res.">
        <title>Identification of novel transcribed sequences on human chromosome 22 by expressed sequence tag mapping.</title>
        <authorList>
            <person name="Hirosawa M."/>
            <person name="Nagase T."/>
            <person name="Murahashi Y."/>
            <person name="Kikuno R."/>
            <person name="Ohara O."/>
        </authorList>
    </citation>
    <scope>NUCLEOTIDE SEQUENCE [LARGE SCALE MRNA] (ISOFORM 1)</scope>
    <source>
        <tissue>Brain</tissue>
    </source>
</reference>
<reference key="4">
    <citation type="submission" date="2005-08" db="EMBL/GenBank/DDBJ databases">
        <authorList>
            <person name="Ohara O."/>
            <person name="Nagase T."/>
            <person name="Kikuno R."/>
        </authorList>
    </citation>
    <scope>SEQUENCE REVISION</scope>
</reference>
<reference key="5">
    <citation type="journal article" date="2004" name="Nat. Genet.">
        <title>Complete sequencing and characterization of 21,243 full-length human cDNAs.</title>
        <authorList>
            <person name="Ota T."/>
            <person name="Suzuki Y."/>
            <person name="Nishikawa T."/>
            <person name="Otsuki T."/>
            <person name="Sugiyama T."/>
            <person name="Irie R."/>
            <person name="Wakamatsu A."/>
            <person name="Hayashi K."/>
            <person name="Sato H."/>
            <person name="Nagai K."/>
            <person name="Kimura K."/>
            <person name="Makita H."/>
            <person name="Sekine M."/>
            <person name="Obayashi M."/>
            <person name="Nishi T."/>
            <person name="Shibahara T."/>
            <person name="Tanaka T."/>
            <person name="Ishii S."/>
            <person name="Yamamoto J."/>
            <person name="Saito K."/>
            <person name="Kawai Y."/>
            <person name="Isono Y."/>
            <person name="Nakamura Y."/>
            <person name="Nagahari K."/>
            <person name="Murakami K."/>
            <person name="Yasuda T."/>
            <person name="Iwayanagi T."/>
            <person name="Wagatsuma M."/>
            <person name="Shiratori A."/>
            <person name="Sudo H."/>
            <person name="Hosoiri T."/>
            <person name="Kaku Y."/>
            <person name="Kodaira H."/>
            <person name="Kondo H."/>
            <person name="Sugawara M."/>
            <person name="Takahashi M."/>
            <person name="Kanda K."/>
            <person name="Yokoi T."/>
            <person name="Furuya T."/>
            <person name="Kikkawa E."/>
            <person name="Omura Y."/>
            <person name="Abe K."/>
            <person name="Kamihara K."/>
            <person name="Katsuta N."/>
            <person name="Sato K."/>
            <person name="Tanikawa M."/>
            <person name="Yamazaki M."/>
            <person name="Ninomiya K."/>
            <person name="Ishibashi T."/>
            <person name="Yamashita H."/>
            <person name="Murakawa K."/>
            <person name="Fujimori K."/>
            <person name="Tanai H."/>
            <person name="Kimata M."/>
            <person name="Watanabe M."/>
            <person name="Hiraoka S."/>
            <person name="Chiba Y."/>
            <person name="Ishida S."/>
            <person name="Ono Y."/>
            <person name="Takiguchi S."/>
            <person name="Watanabe S."/>
            <person name="Yosida M."/>
            <person name="Hotuta T."/>
            <person name="Kusano J."/>
            <person name="Kanehori K."/>
            <person name="Takahashi-Fujii A."/>
            <person name="Hara H."/>
            <person name="Tanase T.-O."/>
            <person name="Nomura Y."/>
            <person name="Togiya S."/>
            <person name="Komai F."/>
            <person name="Hara R."/>
            <person name="Takeuchi K."/>
            <person name="Arita M."/>
            <person name="Imose N."/>
            <person name="Musashino K."/>
            <person name="Yuuki H."/>
            <person name="Oshima A."/>
            <person name="Sasaki N."/>
            <person name="Aotsuka S."/>
            <person name="Yoshikawa Y."/>
            <person name="Matsunawa H."/>
            <person name="Ichihara T."/>
            <person name="Shiohata N."/>
            <person name="Sano S."/>
            <person name="Moriya S."/>
            <person name="Momiyama H."/>
            <person name="Satoh N."/>
            <person name="Takami S."/>
            <person name="Terashima Y."/>
            <person name="Suzuki O."/>
            <person name="Nakagawa S."/>
            <person name="Senoh A."/>
            <person name="Mizoguchi H."/>
            <person name="Goto Y."/>
            <person name="Shimizu F."/>
            <person name="Wakebe H."/>
            <person name="Hishigaki H."/>
            <person name="Watanabe T."/>
            <person name="Sugiyama A."/>
            <person name="Takemoto M."/>
            <person name="Kawakami B."/>
            <person name="Yamazaki M."/>
            <person name="Watanabe K."/>
            <person name="Kumagai A."/>
            <person name="Itakura S."/>
            <person name="Fukuzumi Y."/>
            <person name="Fujimori Y."/>
            <person name="Komiyama M."/>
            <person name="Tashiro H."/>
            <person name="Tanigami A."/>
            <person name="Fujiwara T."/>
            <person name="Ono T."/>
            <person name="Yamada K."/>
            <person name="Fujii Y."/>
            <person name="Ozaki K."/>
            <person name="Hirao M."/>
            <person name="Ohmori Y."/>
            <person name="Kawabata A."/>
            <person name="Hikiji T."/>
            <person name="Kobatake N."/>
            <person name="Inagaki H."/>
            <person name="Ikema Y."/>
            <person name="Okamoto S."/>
            <person name="Okitani R."/>
            <person name="Kawakami T."/>
            <person name="Noguchi S."/>
            <person name="Itoh T."/>
            <person name="Shigeta K."/>
            <person name="Senba T."/>
            <person name="Matsumura K."/>
            <person name="Nakajima Y."/>
            <person name="Mizuno T."/>
            <person name="Morinaga M."/>
            <person name="Sasaki M."/>
            <person name="Togashi T."/>
            <person name="Oyama M."/>
            <person name="Hata H."/>
            <person name="Watanabe M."/>
            <person name="Komatsu T."/>
            <person name="Mizushima-Sugano J."/>
            <person name="Satoh T."/>
            <person name="Shirai Y."/>
            <person name="Takahashi Y."/>
            <person name="Nakagawa K."/>
            <person name="Okumura K."/>
            <person name="Nagase T."/>
            <person name="Nomura N."/>
            <person name="Kikuchi H."/>
            <person name="Masuho Y."/>
            <person name="Yamashita R."/>
            <person name="Nakai K."/>
            <person name="Yada T."/>
            <person name="Nakamura Y."/>
            <person name="Ohara O."/>
            <person name="Isogai T."/>
            <person name="Sugano S."/>
        </authorList>
    </citation>
    <scope>NUCLEOTIDE SEQUENCE [LARGE SCALE MRNA] (ISOFORMS 3; 4; 5 AND 6)</scope>
    <source>
        <tissue>Placenta</tissue>
        <tissue>Testis</tissue>
        <tissue>Thalamus</tissue>
    </source>
</reference>
<reference key="6">
    <citation type="journal article" date="1999" name="Nature">
        <title>The DNA sequence of human chromosome 22.</title>
        <authorList>
            <person name="Dunham I."/>
            <person name="Hunt A.R."/>
            <person name="Collins J.E."/>
            <person name="Bruskiewich R."/>
            <person name="Beare D.M."/>
            <person name="Clamp M."/>
            <person name="Smink L.J."/>
            <person name="Ainscough R."/>
            <person name="Almeida J.P."/>
            <person name="Babbage A.K."/>
            <person name="Bagguley C."/>
            <person name="Bailey J."/>
            <person name="Barlow K.F."/>
            <person name="Bates K.N."/>
            <person name="Beasley O.P."/>
            <person name="Bird C.P."/>
            <person name="Blakey S.E."/>
            <person name="Bridgeman A.M."/>
            <person name="Buck D."/>
            <person name="Burgess J."/>
            <person name="Burrill W.D."/>
            <person name="Burton J."/>
            <person name="Carder C."/>
            <person name="Carter N.P."/>
            <person name="Chen Y."/>
            <person name="Clark G."/>
            <person name="Clegg S.M."/>
            <person name="Cobley V.E."/>
            <person name="Cole C.G."/>
            <person name="Collier R.E."/>
            <person name="Connor R."/>
            <person name="Conroy D."/>
            <person name="Corby N.R."/>
            <person name="Coville G.J."/>
            <person name="Cox A.V."/>
            <person name="Davis J."/>
            <person name="Dawson E."/>
            <person name="Dhami P.D."/>
            <person name="Dockree C."/>
            <person name="Dodsworth S.J."/>
            <person name="Durbin R.M."/>
            <person name="Ellington A.G."/>
            <person name="Evans K.L."/>
            <person name="Fey J.M."/>
            <person name="Fleming K."/>
            <person name="French L."/>
            <person name="Garner A.A."/>
            <person name="Gilbert J.G.R."/>
            <person name="Goward M.E."/>
            <person name="Grafham D.V."/>
            <person name="Griffiths M.N.D."/>
            <person name="Hall C."/>
            <person name="Hall R.E."/>
            <person name="Hall-Tamlyn G."/>
            <person name="Heathcott R.W."/>
            <person name="Ho S."/>
            <person name="Holmes S."/>
            <person name="Hunt S.E."/>
            <person name="Jones M.C."/>
            <person name="Kershaw J."/>
            <person name="Kimberley A.M."/>
            <person name="King A."/>
            <person name="Laird G.K."/>
            <person name="Langford C.F."/>
            <person name="Leversha M.A."/>
            <person name="Lloyd C."/>
            <person name="Lloyd D.M."/>
            <person name="Martyn I.D."/>
            <person name="Mashreghi-Mohammadi M."/>
            <person name="Matthews L.H."/>
            <person name="Mccann O.T."/>
            <person name="Mcclay J."/>
            <person name="Mclaren S."/>
            <person name="McMurray A.A."/>
            <person name="Milne S.A."/>
            <person name="Mortimore B.J."/>
            <person name="Odell C.N."/>
            <person name="Pavitt R."/>
            <person name="Pearce A.V."/>
            <person name="Pearson D."/>
            <person name="Phillimore B.J.C.T."/>
            <person name="Phillips S.H."/>
            <person name="Plumb R.W."/>
            <person name="Ramsay H."/>
            <person name="Ramsey Y."/>
            <person name="Rogers L."/>
            <person name="Ross M.T."/>
            <person name="Scott C.E."/>
            <person name="Sehra H.K."/>
            <person name="Skuce C.D."/>
            <person name="Smalley S."/>
            <person name="Smith M.L."/>
            <person name="Soderlund C."/>
            <person name="Spragon L."/>
            <person name="Steward C.A."/>
            <person name="Sulston J.E."/>
            <person name="Swann R.M."/>
            <person name="Vaudin M."/>
            <person name="Wall M."/>
            <person name="Wallis J.M."/>
            <person name="Whiteley M.N."/>
            <person name="Willey D.L."/>
            <person name="Williams L."/>
            <person name="Williams S.A."/>
            <person name="Williamson H."/>
            <person name="Wilmer T.E."/>
            <person name="Wilming L."/>
            <person name="Wright C.L."/>
            <person name="Hubbard T."/>
            <person name="Bentley D.R."/>
            <person name="Beck S."/>
            <person name="Rogers J."/>
            <person name="Shimizu N."/>
            <person name="Minoshima S."/>
            <person name="Kawasaki K."/>
            <person name="Sasaki T."/>
            <person name="Asakawa S."/>
            <person name="Kudoh J."/>
            <person name="Shintani A."/>
            <person name="Shibuya K."/>
            <person name="Yoshizaki Y."/>
            <person name="Aoki N."/>
            <person name="Mitsuyama S."/>
            <person name="Roe B.A."/>
            <person name="Chen F."/>
            <person name="Chu L."/>
            <person name="Crabtree J."/>
            <person name="Deschamps S."/>
            <person name="Do A."/>
            <person name="Do T."/>
            <person name="Dorman A."/>
            <person name="Fang F."/>
            <person name="Fu Y."/>
            <person name="Hu P."/>
            <person name="Hua A."/>
            <person name="Kenton S."/>
            <person name="Lai H."/>
            <person name="Lao H.I."/>
            <person name="Lewis J."/>
            <person name="Lewis S."/>
            <person name="Lin S.-P."/>
            <person name="Loh P."/>
            <person name="Malaj E."/>
            <person name="Nguyen T."/>
            <person name="Pan H."/>
            <person name="Phan S."/>
            <person name="Qi S."/>
            <person name="Qian Y."/>
            <person name="Ray L."/>
            <person name="Ren Q."/>
            <person name="Shaull S."/>
            <person name="Sloan D."/>
            <person name="Song L."/>
            <person name="Wang Q."/>
            <person name="Wang Y."/>
            <person name="Wang Z."/>
            <person name="White J."/>
            <person name="Willingham D."/>
            <person name="Wu H."/>
            <person name="Yao Z."/>
            <person name="Zhan M."/>
            <person name="Zhang G."/>
            <person name="Chissoe S."/>
            <person name="Murray J."/>
            <person name="Miller N."/>
            <person name="Minx P."/>
            <person name="Fulton R."/>
            <person name="Johnson D."/>
            <person name="Bemis G."/>
            <person name="Bentley D."/>
            <person name="Bradshaw H."/>
            <person name="Bourne S."/>
            <person name="Cordes M."/>
            <person name="Du Z."/>
            <person name="Fulton L."/>
            <person name="Goela D."/>
            <person name="Graves T."/>
            <person name="Hawkins J."/>
            <person name="Hinds K."/>
            <person name="Kemp K."/>
            <person name="Latreille P."/>
            <person name="Layman D."/>
            <person name="Ozersky P."/>
            <person name="Rohlfing T."/>
            <person name="Scheet P."/>
            <person name="Walker C."/>
            <person name="Wamsley A."/>
            <person name="Wohldmann P."/>
            <person name="Pepin K."/>
            <person name="Nelson J."/>
            <person name="Korf I."/>
            <person name="Bedell J.A."/>
            <person name="Hillier L.W."/>
            <person name="Mardis E."/>
            <person name="Waterston R."/>
            <person name="Wilson R."/>
            <person name="Emanuel B.S."/>
            <person name="Shaikh T."/>
            <person name="Kurahashi H."/>
            <person name="Saitta S."/>
            <person name="Budarf M.L."/>
            <person name="McDermid H.E."/>
            <person name="Johnson A."/>
            <person name="Wong A.C.C."/>
            <person name="Morrow B.E."/>
            <person name="Edelmann L."/>
            <person name="Kim U.J."/>
            <person name="Shizuya H."/>
            <person name="Simon M.I."/>
            <person name="Dumanski J.P."/>
            <person name="Peyrard M."/>
            <person name="Kedra D."/>
            <person name="Seroussi E."/>
            <person name="Fransson I."/>
            <person name="Tapia I."/>
            <person name="Bruder C.E."/>
            <person name="O'Brien K.P."/>
            <person name="Wilkinson P."/>
            <person name="Bodenteich A."/>
            <person name="Hartman K."/>
            <person name="Hu X."/>
            <person name="Khan A.S."/>
            <person name="Lane L."/>
            <person name="Tilahun Y."/>
            <person name="Wright H."/>
        </authorList>
    </citation>
    <scope>NUCLEOTIDE SEQUENCE [LARGE SCALE GENOMIC DNA]</scope>
</reference>
<reference key="7">
    <citation type="submission" date="2005-07" db="EMBL/GenBank/DDBJ databases">
        <authorList>
            <person name="Mural R.J."/>
            <person name="Istrail S."/>
            <person name="Sutton G.G."/>
            <person name="Florea L."/>
            <person name="Halpern A.L."/>
            <person name="Mobarry C.M."/>
            <person name="Lippert R."/>
            <person name="Walenz B."/>
            <person name="Shatkay H."/>
            <person name="Dew I."/>
            <person name="Miller J.R."/>
            <person name="Flanigan M.J."/>
            <person name="Edwards N.J."/>
            <person name="Bolanos R."/>
            <person name="Fasulo D."/>
            <person name="Halldorsson B.V."/>
            <person name="Hannenhalli S."/>
            <person name="Turner R."/>
            <person name="Yooseph S."/>
            <person name="Lu F."/>
            <person name="Nusskern D.R."/>
            <person name="Shue B.C."/>
            <person name="Zheng X.H."/>
            <person name="Zhong F."/>
            <person name="Delcher A.L."/>
            <person name="Huson D.H."/>
            <person name="Kravitz S.A."/>
            <person name="Mouchard L."/>
            <person name="Reinert K."/>
            <person name="Remington K.A."/>
            <person name="Clark A.G."/>
            <person name="Waterman M.S."/>
            <person name="Eichler E.E."/>
            <person name="Adams M.D."/>
            <person name="Hunkapiller M.W."/>
            <person name="Myers E.W."/>
            <person name="Venter J.C."/>
        </authorList>
    </citation>
    <scope>NUCLEOTIDE SEQUENCE [LARGE SCALE GENOMIC DNA]</scope>
</reference>
<reference key="8">
    <citation type="journal article" date="2004" name="Genome Res.">
        <title>The status, quality, and expansion of the NIH full-length cDNA project: the Mammalian Gene Collection (MGC).</title>
        <authorList>
            <consortium name="The MGC Project Team"/>
        </authorList>
    </citation>
    <scope>NUCLEOTIDE SEQUENCE [LARGE SCALE MRNA] (ISOFORM 2)</scope>
</reference>
<reference key="9">
    <citation type="journal article" date="2013" name="J. Proteome Res.">
        <title>Toward a comprehensive characterization of a human cancer cell phosphoproteome.</title>
        <authorList>
            <person name="Zhou H."/>
            <person name="Di Palma S."/>
            <person name="Preisinger C."/>
            <person name="Peng M."/>
            <person name="Polat A.N."/>
            <person name="Heck A.J."/>
            <person name="Mohammed S."/>
        </authorList>
    </citation>
    <scope>PHOSPHORYLATION [LARGE SCALE ANALYSIS] AT SER-763</scope>
    <scope>IDENTIFICATION BY MASS SPECTROMETRY [LARGE SCALE ANALYSIS]</scope>
    <source>
        <tissue>Cervix carcinoma</tissue>
        <tissue>Erythroleukemia</tissue>
    </source>
</reference>
<sequence length="916" mass="101266">MGKAAAPSRGGGCGGRSRGLSSLFTVVPCLSCHTAAPGMSASTSGSGPEPKPQPQPVPEPERGPLSEQVSEAVSEAVPRSEPVSETTSEPEPGAGQPSELLQGSRPGSESSSGVGAGPFTKAASEPLSRAVGSATFLRPESGSLPALKPLPLLRPGQAKTPLGVPMSGTGTTSSAPLALLPLDSFEGWLLKWTNYLKGYQRRWFVLGNGLLSYYRNQGEMAHTCRGTINLSTAHIDTEDSCGILLTSGARSYHLKASSEVDRQQWITALELAKAKAVRVMNTHSDDSGDDDEATTPADKSELHHTLKNLSLKLDDLSTCNDLIAKHGAALQRSLTELDGLKIPSESGEKLKVVNERATLFRITSNAMINACRDFLELAEIHSRKWQRALQYEQEQRVHLEETIEQLAKQHNSLERAFHSAPGRPANPSKSFIEGSLLTPKGEDSEEDEDTEYFDAMEDSTSFITVITEAKEDSRKAEGSTGTSSVDWSSADNVLDGASLVPKGSSKVKRRVRIPNKPNYSLNLWSIMKNCIGRELSRIPMPVNFNEPLSMLQRLTEDLEYHHLLDKAVHCTSSVEQMCLVAAFSVSSYSTTVHRIAKPFNPMLGETFELDRLDDMGLRSLCEQVSHHPPSAAHYVFSKHGWSLWQEITISSKFRGKYISIMPLGAIHLEFQASGNHYVWRKSTSTVHNIIVGKLWIDQSGDIEIVNHKTNDRCQLKFLPYSYFSKEAARKVTGVVSDSQGKAHYVLSGSWDEQMECSKVMHSSPSSPSSDGKQKTVYQTLSAKLLWKKYPLPENAENMYYFSELALTLNEHEEGVAPTDSRLRPDQRLMEKGRWDEANTEKQRLEEKQRLSRRRRLEACGPGSSCSSEEEKEADAYTPLWFEKRLDPLTGEMACVYKGGYWEAKEKQDWHMCPNIF</sequence>
<proteinExistence type="evidence at protein level"/>
<accession>Q969R2</accession>
<accession>B0QYG1</accession>
<accession>B4DK24</accession>
<accession>B4DKE4</accession>
<accession>B4DTR3</accession>
<accession>F5H2A3</accession>
<accession>O60396</accession>
<accession>Q0VF99</accession>
<accession>Q8NA37</accession>
<accession>Q9BY96</accession>
<accession>Q9BZF0</accession>
<name>OSBP2_HUMAN</name>
<organism>
    <name type="scientific">Homo sapiens</name>
    <name type="common">Human</name>
    <dbReference type="NCBI Taxonomy" id="9606"/>
    <lineage>
        <taxon>Eukaryota</taxon>
        <taxon>Metazoa</taxon>
        <taxon>Chordata</taxon>
        <taxon>Craniata</taxon>
        <taxon>Vertebrata</taxon>
        <taxon>Euteleostomi</taxon>
        <taxon>Mammalia</taxon>
        <taxon>Eutheria</taxon>
        <taxon>Euarchontoglires</taxon>
        <taxon>Primates</taxon>
        <taxon>Haplorrhini</taxon>
        <taxon>Catarrhini</taxon>
        <taxon>Hominidae</taxon>
        <taxon>Homo</taxon>
    </lineage>
</organism>
<comment type="function">
    <text evidence="2 5">Binds 7-ketocholesterol (PubMed:11278871). Acts during spermatid development where its function is required prior to the removal of cytoplasm from the sperm head (By similarity).</text>
</comment>
<comment type="subunit">
    <text evidence="1">Interacts with CCDC159.</text>
</comment>
<comment type="interaction">
    <interactant intactId="EBI-7405817">
        <id>Q969R2</id>
    </interactant>
    <interactant intactId="EBI-739832">
        <id>Q8TBB1</id>
        <label>LNX1</label>
    </interactant>
    <organismsDiffer>false</organismsDiffer>
    <experiments>3</experiments>
</comment>
<comment type="interaction">
    <interactant intactId="EBI-12211505">
        <id>Q969R2-2</id>
    </interactant>
    <interactant intactId="EBI-80440">
        <id>Q92796</id>
        <label>DLG3</label>
    </interactant>
    <organismsDiffer>false</organismsDiffer>
    <experiments>3</experiments>
</comment>
<comment type="interaction">
    <interactant intactId="EBI-12211505">
        <id>Q969R2-2</id>
    </interactant>
    <interactant intactId="EBI-11102276">
        <id>Q9HD26-2</id>
        <label>GOPC</label>
    </interactant>
    <organismsDiffer>false</organismsDiffer>
    <experiments>3</experiments>
</comment>
<comment type="interaction">
    <interactant intactId="EBI-12211505">
        <id>Q969R2-2</id>
    </interactant>
    <interactant intactId="EBI-739832">
        <id>Q8TBB1</id>
        <label>LNX1</label>
    </interactant>
    <organismsDiffer>false</organismsDiffer>
    <experiments>3</experiments>
</comment>
<comment type="interaction">
    <interactant intactId="EBI-12211505">
        <id>Q969R2-2</id>
    </interactant>
    <interactant intactId="EBI-79165">
        <id>Q9NRD5</id>
        <label>PICK1</label>
    </interactant>
    <organismsDiffer>false</organismsDiffer>
    <experiments>3</experiments>
</comment>
<comment type="subcellular location">
    <subcellularLocation>
        <location evidence="5">Membrane</location>
        <topology evidence="5">Peripheral membrane protein</topology>
    </subcellularLocation>
    <subcellularLocation>
        <location evidence="2">Cytoplasmic vesicle</location>
        <location evidence="2">Secretory vesicle</location>
        <location evidence="2">Acrosome</location>
    </subcellularLocation>
    <text evidence="2">Localizes to the equatorial segment of the acrosome.</text>
</comment>
<comment type="alternative products">
    <event type="alternative splicing"/>
    <isoform>
        <id>Q969R2-1</id>
        <name>1</name>
        <sequence type="displayed"/>
    </isoform>
    <isoform>
        <id>Q969R2-2</id>
        <name>2</name>
        <sequence type="described" ref="VSP_054520"/>
    </isoform>
    <isoform>
        <id>Q969R2-3</id>
        <name>3</name>
        <sequence type="described" ref="VSP_054886 VSP_054887 VSP_054520"/>
    </isoform>
    <isoform>
        <id>Q969R2-4</id>
        <name>4</name>
        <sequence type="described" ref="VSP_055263 VSP_054520"/>
    </isoform>
    <isoform>
        <id>Q969R2-5</id>
        <name>5</name>
        <sequence type="described" ref="VSP_055262 VSP_054520"/>
    </isoform>
    <isoform>
        <id>Q969R2-6</id>
        <name>6</name>
        <sequence type="described" ref="VSP_055751 VSP_055752"/>
    </isoform>
</comment>
<comment type="tissue specificity">
    <text evidence="5">Expressed mainly in retina, testis, and fetal liver.</text>
</comment>
<comment type="similarity">
    <text evidence="8">Belongs to the OSBP family.</text>
</comment>
<comment type="sequence caution" evidence="8">
    <conflict type="erroneous initiation">
        <sequence resource="EMBL-CDS" id="AAK56864"/>
    </conflict>
</comment>
<comment type="sequence caution" evidence="8">
    <conflict type="erroneous initiation">
        <sequence resource="EMBL-CDS" id="AAK56865"/>
    </conflict>
</comment>
<comment type="sequence caution" evidence="8">
    <conflict type="erroneous initiation">
        <sequence resource="EMBL-CDS" id="BAB33334"/>
    </conflict>
</comment>
<dbReference type="EMBL" id="AF288741">
    <property type="protein sequence ID" value="AAK56864.1"/>
    <property type="status" value="ALT_INIT"/>
    <property type="molecule type" value="mRNA"/>
</dbReference>
<dbReference type="EMBL" id="AF288742">
    <property type="protein sequence ID" value="AAK56865.1"/>
    <property type="status" value="ALT_INIT"/>
    <property type="molecule type" value="Genomic_DNA"/>
</dbReference>
<dbReference type="EMBL" id="AF323731">
    <property type="protein sequence ID" value="AAG53406.1"/>
    <property type="molecule type" value="mRNA"/>
</dbReference>
<dbReference type="EMBL" id="AB051451">
    <property type="protein sequence ID" value="BAB33334.2"/>
    <property type="status" value="ALT_INIT"/>
    <property type="molecule type" value="mRNA"/>
</dbReference>
<dbReference type="EMBL" id="AK093196">
    <property type="protein sequence ID" value="BAC04091.1"/>
    <property type="molecule type" value="mRNA"/>
</dbReference>
<dbReference type="EMBL" id="AK296525">
    <property type="protein sequence ID" value="BAG59156.1"/>
    <property type="molecule type" value="mRNA"/>
</dbReference>
<dbReference type="EMBL" id="AK300323">
    <property type="protein sequence ID" value="BAG62075.1"/>
    <property type="molecule type" value="mRNA"/>
</dbReference>
<dbReference type="EMBL" id="AK296354">
    <property type="protein sequence ID" value="BAG59036.1"/>
    <property type="molecule type" value="mRNA"/>
</dbReference>
<dbReference type="EMBL" id="AC004542">
    <property type="protein sequence ID" value="AAC12953.1"/>
    <property type="molecule type" value="Genomic_DNA"/>
</dbReference>
<dbReference type="EMBL" id="AL022336">
    <property type="status" value="NOT_ANNOTATED_CDS"/>
    <property type="molecule type" value="Genomic_DNA"/>
</dbReference>
<dbReference type="EMBL" id="AL079299">
    <property type="status" value="NOT_ANNOTATED_CDS"/>
    <property type="molecule type" value="Genomic_DNA"/>
</dbReference>
<dbReference type="EMBL" id="CH471095">
    <property type="protein sequence ID" value="EAW59916.1"/>
    <property type="molecule type" value="Genomic_DNA"/>
</dbReference>
<dbReference type="EMBL" id="BC118914">
    <property type="protein sequence ID" value="AAI18915.1"/>
    <property type="molecule type" value="mRNA"/>
</dbReference>
<dbReference type="CCDS" id="CCDS43002.1">
    <molecule id="Q969R2-1"/>
</dbReference>
<dbReference type="CCDS" id="CCDS63446.1">
    <molecule id="Q969R2-3"/>
</dbReference>
<dbReference type="CCDS" id="CCDS63448.1">
    <molecule id="Q969R2-2"/>
</dbReference>
<dbReference type="CCDS" id="CCDS63449.1">
    <molecule id="Q969R2-6"/>
</dbReference>
<dbReference type="CCDS" id="CCDS63450.1">
    <molecule id="Q969R2-4"/>
</dbReference>
<dbReference type="CCDS" id="CCDS63451.1">
    <molecule id="Q969R2-5"/>
</dbReference>
<dbReference type="PIR" id="T02435">
    <property type="entry name" value="T02435"/>
</dbReference>
<dbReference type="RefSeq" id="NP_001269667.1">
    <molecule id="Q969R2-3"/>
    <property type="nucleotide sequence ID" value="NM_001282738.2"/>
</dbReference>
<dbReference type="RefSeq" id="NP_001269668.1">
    <molecule id="Q969R2-2"/>
    <property type="nucleotide sequence ID" value="NM_001282739.2"/>
</dbReference>
<dbReference type="RefSeq" id="NP_001269669.1">
    <molecule id="Q969R2-4"/>
    <property type="nucleotide sequence ID" value="NM_001282740.2"/>
</dbReference>
<dbReference type="RefSeq" id="NP_001269670.1">
    <molecule id="Q969R2-6"/>
    <property type="nucleotide sequence ID" value="NM_001282741.2"/>
</dbReference>
<dbReference type="RefSeq" id="NP_001269671.1">
    <molecule id="Q969R2-5"/>
    <property type="nucleotide sequence ID" value="NM_001282742.2"/>
</dbReference>
<dbReference type="RefSeq" id="NP_110385.1">
    <molecule id="Q969R2-1"/>
    <property type="nucleotide sequence ID" value="NM_030758.4"/>
</dbReference>
<dbReference type="RefSeq" id="XP_016884201.1">
    <property type="nucleotide sequence ID" value="XM_017028712.1"/>
</dbReference>
<dbReference type="SMR" id="Q969R2"/>
<dbReference type="BioGRID" id="117263">
    <property type="interactions" value="25"/>
</dbReference>
<dbReference type="ELM" id="Q969R2"/>
<dbReference type="FunCoup" id="Q969R2">
    <property type="interactions" value="2692"/>
</dbReference>
<dbReference type="IntAct" id="Q969R2">
    <property type="interactions" value="13"/>
</dbReference>
<dbReference type="MINT" id="Q969R2"/>
<dbReference type="STRING" id="9606.ENSP00000332576"/>
<dbReference type="BindingDB" id="Q969R2"/>
<dbReference type="ChEMBL" id="CHEMBL5465343"/>
<dbReference type="GlyGen" id="Q969R2">
    <property type="glycosylation" value="2 sites, 1 O-linked glycan (1 site)"/>
</dbReference>
<dbReference type="iPTMnet" id="Q969R2"/>
<dbReference type="PhosphoSitePlus" id="Q969R2"/>
<dbReference type="SwissPalm" id="Q969R2"/>
<dbReference type="BioMuta" id="OSBP2"/>
<dbReference type="DMDM" id="88984633"/>
<dbReference type="jPOST" id="Q969R2"/>
<dbReference type="MassIVE" id="Q969R2"/>
<dbReference type="PaxDb" id="9606-ENSP00000332576"/>
<dbReference type="PeptideAtlas" id="Q969R2"/>
<dbReference type="ProteomicsDB" id="25910"/>
<dbReference type="ProteomicsDB" id="4454"/>
<dbReference type="ProteomicsDB" id="5124"/>
<dbReference type="ProteomicsDB" id="58834"/>
<dbReference type="ProteomicsDB" id="72634"/>
<dbReference type="ProteomicsDB" id="75819">
    <molecule id="Q969R2-1"/>
</dbReference>
<dbReference type="Pumba" id="Q969R2"/>
<dbReference type="Antibodypedia" id="5683">
    <property type="antibodies" value="109 antibodies from 21 providers"/>
</dbReference>
<dbReference type="DNASU" id="23762"/>
<dbReference type="Ensembl" id="ENST00000332585.11">
    <molecule id="Q969R2-1"/>
    <property type="protein sequence ID" value="ENSP00000332576.6"/>
    <property type="gene ID" value="ENSG00000184792.16"/>
</dbReference>
<dbReference type="Ensembl" id="ENST00000401475.5">
    <molecule id="Q969R2-4"/>
    <property type="protein sequence ID" value="ENSP00000385254.1"/>
    <property type="gene ID" value="ENSG00000184792.16"/>
</dbReference>
<dbReference type="Ensembl" id="ENST00000437268.6">
    <molecule id="Q969R2-6"/>
    <property type="protein sequence ID" value="ENSP00000389200.2"/>
    <property type="gene ID" value="ENSG00000184792.16"/>
</dbReference>
<dbReference type="Ensembl" id="ENST00000438716.3">
    <molecule id="Q969R2-3"/>
    <property type="protein sequence ID" value="ENSP00000411052.2"/>
    <property type="gene ID" value="ENSG00000184792.16"/>
</dbReference>
<dbReference type="Ensembl" id="ENST00000446658.6">
    <molecule id="Q969R2-2"/>
    <property type="protein sequence ID" value="ENSP00000392080.2"/>
    <property type="gene ID" value="ENSG00000184792.16"/>
</dbReference>
<dbReference type="Ensembl" id="ENST00000535268.5">
    <molecule id="Q969R2-5"/>
    <property type="protein sequence ID" value="ENSP00000438713.1"/>
    <property type="gene ID" value="ENSG00000184792.16"/>
</dbReference>
<dbReference type="GeneID" id="23762"/>
<dbReference type="KEGG" id="hsa:23762"/>
<dbReference type="MANE-Select" id="ENST00000332585.11">
    <property type="protein sequence ID" value="ENSP00000332576.6"/>
    <property type="RefSeq nucleotide sequence ID" value="NM_030758.4"/>
    <property type="RefSeq protein sequence ID" value="NP_110385.1"/>
</dbReference>
<dbReference type="UCSC" id="uc003aiy.1">
    <molecule id="Q969R2-1"/>
    <property type="organism name" value="human"/>
</dbReference>
<dbReference type="AGR" id="HGNC:8504"/>
<dbReference type="CTD" id="23762"/>
<dbReference type="DisGeNET" id="23762"/>
<dbReference type="GeneCards" id="OSBP2"/>
<dbReference type="HGNC" id="HGNC:8504">
    <property type="gene designation" value="OSBP2"/>
</dbReference>
<dbReference type="HPA" id="ENSG00000184792">
    <property type="expression patterns" value="Tissue enhanced (bone marrow, retina)"/>
</dbReference>
<dbReference type="MIM" id="606729">
    <property type="type" value="gene"/>
</dbReference>
<dbReference type="neXtProt" id="NX_Q969R2"/>
<dbReference type="OpenTargets" id="ENSG00000184792"/>
<dbReference type="PharmGKB" id="PA32823"/>
<dbReference type="VEuPathDB" id="HostDB:ENSG00000184792"/>
<dbReference type="eggNOG" id="KOG1737">
    <property type="taxonomic scope" value="Eukaryota"/>
</dbReference>
<dbReference type="GeneTree" id="ENSGT00940000157987"/>
<dbReference type="HOGENOM" id="CLU_007105_6_1_1"/>
<dbReference type="InParanoid" id="Q969R2"/>
<dbReference type="OMA" id="LPEMKGW"/>
<dbReference type="OrthoDB" id="14833at2759"/>
<dbReference type="PAN-GO" id="Q969R2">
    <property type="GO annotations" value="6 GO annotations based on evolutionary models"/>
</dbReference>
<dbReference type="PhylomeDB" id="Q969R2"/>
<dbReference type="TreeFam" id="TF320922"/>
<dbReference type="PathwayCommons" id="Q969R2"/>
<dbReference type="SignaLink" id="Q969R2"/>
<dbReference type="SIGNOR" id="Q969R2"/>
<dbReference type="BioGRID-ORCS" id="23762">
    <property type="hits" value="14 hits in 1152 CRISPR screens"/>
</dbReference>
<dbReference type="ChiTaRS" id="OSBP2">
    <property type="organism name" value="human"/>
</dbReference>
<dbReference type="GeneWiki" id="OSBP2"/>
<dbReference type="GenomeRNAi" id="23762"/>
<dbReference type="Pharos" id="Q969R2">
    <property type="development level" value="Tbio"/>
</dbReference>
<dbReference type="PRO" id="PR:Q969R2"/>
<dbReference type="Proteomes" id="UP000005640">
    <property type="component" value="Chromosome 22"/>
</dbReference>
<dbReference type="RNAct" id="Q969R2">
    <property type="molecule type" value="protein"/>
</dbReference>
<dbReference type="Bgee" id="ENSG00000184792">
    <property type="expression patterns" value="Expressed in buccal mucosa cell and 141 other cell types or tissues"/>
</dbReference>
<dbReference type="ExpressionAtlas" id="Q969R2">
    <property type="expression patterns" value="baseline and differential"/>
</dbReference>
<dbReference type="GO" id="GO:0001669">
    <property type="term" value="C:acrosomal vesicle"/>
    <property type="evidence" value="ECO:0000250"/>
    <property type="project" value="UniProtKB"/>
</dbReference>
<dbReference type="GO" id="GO:0097440">
    <property type="term" value="C:apical dendrite"/>
    <property type="evidence" value="ECO:0007669"/>
    <property type="project" value="Ensembl"/>
</dbReference>
<dbReference type="GO" id="GO:0005829">
    <property type="term" value="C:cytosol"/>
    <property type="evidence" value="ECO:0000318"/>
    <property type="project" value="GO_Central"/>
</dbReference>
<dbReference type="GO" id="GO:0097038">
    <property type="term" value="C:perinuclear endoplasmic reticulum"/>
    <property type="evidence" value="ECO:0000318"/>
    <property type="project" value="GO_Central"/>
</dbReference>
<dbReference type="GO" id="GO:0005886">
    <property type="term" value="C:plasma membrane"/>
    <property type="evidence" value="ECO:0000318"/>
    <property type="project" value="GO_Central"/>
</dbReference>
<dbReference type="GO" id="GO:0015485">
    <property type="term" value="F:cholesterol binding"/>
    <property type="evidence" value="ECO:0000314"/>
    <property type="project" value="BHF-UCL"/>
</dbReference>
<dbReference type="GO" id="GO:0006869">
    <property type="term" value="P:lipid transport"/>
    <property type="evidence" value="ECO:0007669"/>
    <property type="project" value="UniProtKB-KW"/>
</dbReference>
<dbReference type="GO" id="GO:0007286">
    <property type="term" value="P:spermatid development"/>
    <property type="evidence" value="ECO:0000250"/>
    <property type="project" value="UniProtKB"/>
</dbReference>
<dbReference type="CDD" id="cd13284">
    <property type="entry name" value="PH_OSBP_ORP4"/>
    <property type="match status" value="1"/>
</dbReference>
<dbReference type="DisProt" id="DP02559"/>
<dbReference type="FunFam" id="2.30.29.30:FF:000074">
    <property type="entry name" value="Oxysterol-binding protein"/>
    <property type="match status" value="1"/>
</dbReference>
<dbReference type="FunFam" id="2.40.160.120:FF:000003">
    <property type="entry name" value="Oxysterol-binding protein"/>
    <property type="match status" value="1"/>
</dbReference>
<dbReference type="Gene3D" id="2.40.160.120">
    <property type="match status" value="1"/>
</dbReference>
<dbReference type="Gene3D" id="2.30.29.30">
    <property type="entry name" value="Pleckstrin-homology domain (PH domain)/Phosphotyrosine-binding domain (PTB)"/>
    <property type="match status" value="1"/>
</dbReference>
<dbReference type="InterPro" id="IPR037239">
    <property type="entry name" value="OSBP_sf"/>
</dbReference>
<dbReference type="InterPro" id="IPR000648">
    <property type="entry name" value="Oxysterol-bd"/>
</dbReference>
<dbReference type="InterPro" id="IPR018494">
    <property type="entry name" value="Oxysterol-bd_CS"/>
</dbReference>
<dbReference type="InterPro" id="IPR011993">
    <property type="entry name" value="PH-like_dom_sf"/>
</dbReference>
<dbReference type="InterPro" id="IPR001849">
    <property type="entry name" value="PH_domain"/>
</dbReference>
<dbReference type="PANTHER" id="PTHR10972:SF194">
    <property type="entry name" value="OXYSTEROL-BINDING PROTEIN 2"/>
    <property type="match status" value="1"/>
</dbReference>
<dbReference type="PANTHER" id="PTHR10972">
    <property type="entry name" value="OXYSTEROL-BINDING PROTEIN-RELATED"/>
    <property type="match status" value="1"/>
</dbReference>
<dbReference type="Pfam" id="PF01237">
    <property type="entry name" value="Oxysterol_BP"/>
    <property type="match status" value="1"/>
</dbReference>
<dbReference type="Pfam" id="PF00169">
    <property type="entry name" value="PH"/>
    <property type="match status" value="1"/>
</dbReference>
<dbReference type="SMART" id="SM00233">
    <property type="entry name" value="PH"/>
    <property type="match status" value="1"/>
</dbReference>
<dbReference type="SUPFAM" id="SSF144000">
    <property type="entry name" value="Oxysterol-binding protein-like"/>
    <property type="match status" value="1"/>
</dbReference>
<dbReference type="SUPFAM" id="SSF50729">
    <property type="entry name" value="PH domain-like"/>
    <property type="match status" value="1"/>
</dbReference>
<dbReference type="PROSITE" id="PS01013">
    <property type="entry name" value="OSBP"/>
    <property type="match status" value="1"/>
</dbReference>
<dbReference type="PROSITE" id="PS50003">
    <property type="entry name" value="PH_DOMAIN"/>
    <property type="match status" value="1"/>
</dbReference>
<keyword id="KW-0025">Alternative splicing</keyword>
<keyword id="KW-0968">Cytoplasmic vesicle</keyword>
<keyword id="KW-0221">Differentiation</keyword>
<keyword id="KW-0445">Lipid transport</keyword>
<keyword id="KW-0446">Lipid-binding</keyword>
<keyword id="KW-0472">Membrane</keyword>
<keyword id="KW-0597">Phosphoprotein</keyword>
<keyword id="KW-1267">Proteomics identification</keyword>
<keyword id="KW-1185">Reference proteome</keyword>
<keyword id="KW-0744">Spermatogenesis</keyword>
<keyword id="KW-0813">Transport</keyword>
<gene>
    <name type="primary">OSBP2</name>
    <name type="synonym">KIAA1664</name>
    <name type="synonym">ORP4</name>
    <name type="synonym">OSBPL4</name>
</gene>
<protein>
    <recommendedName>
        <fullName>Oxysterol-binding protein 2</fullName>
    </recommendedName>
    <alternativeName>
        <fullName>Oxysterol-binding protein-related protein 4</fullName>
        <shortName>ORP-4</shortName>
        <shortName>OSBP-related protein 4</shortName>
    </alternativeName>
</protein>